<gene>
    <name type="primary">rnhB</name>
    <name type="ordered locus">BMEI1542</name>
</gene>
<dbReference type="EC" id="3.1.26.4"/>
<dbReference type="EMBL" id="AF054610">
    <property type="protein sequence ID" value="AAC08032.1"/>
    <property type="molecule type" value="Genomic_DNA"/>
</dbReference>
<dbReference type="EMBL" id="AE008917">
    <property type="protein sequence ID" value="AAL52723.1"/>
    <property type="molecule type" value="Genomic_DNA"/>
</dbReference>
<dbReference type="PIR" id="AH3444">
    <property type="entry name" value="AH3444"/>
</dbReference>
<dbReference type="RefSeq" id="WP_004683016.1">
    <property type="nucleotide sequence ID" value="NZ_GG703778.1"/>
</dbReference>
<dbReference type="SMR" id="P0A4D9"/>
<dbReference type="KEGG" id="bme:BMEI1542"/>
<dbReference type="eggNOG" id="COG0164">
    <property type="taxonomic scope" value="Bacteria"/>
</dbReference>
<dbReference type="PhylomeDB" id="P0A4D9"/>
<dbReference type="Proteomes" id="UP000000419">
    <property type="component" value="Chromosome I"/>
</dbReference>
<dbReference type="GO" id="GO:0005737">
    <property type="term" value="C:cytoplasm"/>
    <property type="evidence" value="ECO:0007669"/>
    <property type="project" value="UniProtKB-SubCell"/>
</dbReference>
<dbReference type="GO" id="GO:0032299">
    <property type="term" value="C:ribonuclease H2 complex"/>
    <property type="evidence" value="ECO:0007669"/>
    <property type="project" value="TreeGrafter"/>
</dbReference>
<dbReference type="GO" id="GO:0030145">
    <property type="term" value="F:manganese ion binding"/>
    <property type="evidence" value="ECO:0007669"/>
    <property type="project" value="UniProtKB-UniRule"/>
</dbReference>
<dbReference type="GO" id="GO:0003723">
    <property type="term" value="F:RNA binding"/>
    <property type="evidence" value="ECO:0007669"/>
    <property type="project" value="InterPro"/>
</dbReference>
<dbReference type="GO" id="GO:0004523">
    <property type="term" value="F:RNA-DNA hybrid ribonuclease activity"/>
    <property type="evidence" value="ECO:0007669"/>
    <property type="project" value="UniProtKB-UniRule"/>
</dbReference>
<dbReference type="GO" id="GO:0043137">
    <property type="term" value="P:DNA replication, removal of RNA primer"/>
    <property type="evidence" value="ECO:0007669"/>
    <property type="project" value="TreeGrafter"/>
</dbReference>
<dbReference type="GO" id="GO:0006298">
    <property type="term" value="P:mismatch repair"/>
    <property type="evidence" value="ECO:0007669"/>
    <property type="project" value="TreeGrafter"/>
</dbReference>
<dbReference type="CDD" id="cd07182">
    <property type="entry name" value="RNase_HII_bacteria_HII_like"/>
    <property type="match status" value="1"/>
</dbReference>
<dbReference type="Gene3D" id="3.30.420.10">
    <property type="entry name" value="Ribonuclease H-like superfamily/Ribonuclease H"/>
    <property type="match status" value="1"/>
</dbReference>
<dbReference type="HAMAP" id="MF_00052_B">
    <property type="entry name" value="RNase_HII_B"/>
    <property type="match status" value="1"/>
</dbReference>
<dbReference type="InterPro" id="IPR022898">
    <property type="entry name" value="RNase_HII"/>
</dbReference>
<dbReference type="InterPro" id="IPR001352">
    <property type="entry name" value="RNase_HII/HIII"/>
</dbReference>
<dbReference type="InterPro" id="IPR024567">
    <property type="entry name" value="RNase_HII/HIII_dom"/>
</dbReference>
<dbReference type="InterPro" id="IPR012337">
    <property type="entry name" value="RNaseH-like_sf"/>
</dbReference>
<dbReference type="InterPro" id="IPR036397">
    <property type="entry name" value="RNaseH_sf"/>
</dbReference>
<dbReference type="NCBIfam" id="NF000595">
    <property type="entry name" value="PRK00015.1-3"/>
    <property type="match status" value="1"/>
</dbReference>
<dbReference type="PANTHER" id="PTHR10954">
    <property type="entry name" value="RIBONUCLEASE H2 SUBUNIT A"/>
    <property type="match status" value="1"/>
</dbReference>
<dbReference type="PANTHER" id="PTHR10954:SF18">
    <property type="entry name" value="RIBONUCLEASE HII"/>
    <property type="match status" value="1"/>
</dbReference>
<dbReference type="Pfam" id="PF01351">
    <property type="entry name" value="RNase_HII"/>
    <property type="match status" value="1"/>
</dbReference>
<dbReference type="SUPFAM" id="SSF53098">
    <property type="entry name" value="Ribonuclease H-like"/>
    <property type="match status" value="1"/>
</dbReference>
<dbReference type="PROSITE" id="PS51975">
    <property type="entry name" value="RNASE_H_2"/>
    <property type="match status" value="1"/>
</dbReference>
<protein>
    <recommendedName>
        <fullName>Ribonuclease HII</fullName>
        <shortName>RNase HII</shortName>
        <ecNumber>3.1.26.4</ecNumber>
    </recommendedName>
</protein>
<proteinExistence type="inferred from homology"/>
<sequence length="220" mass="23385">MKRSASDSPLLFDLPLAPDFSQEQQLMKRGLKHIAGIDEAGRGPLAGPVVAAAVVLDQNDLPEGLDDSKRLTAARREALYEIILTKAITVSVASLSARSIDASDIRKAALEAMRRAVIGLTLKPCHALVDGRDVPPGLPCPGSALVKGDQRSVSIAAASIVAKVTRDRMMIRAGAAHPPYGLEIHAGYATQKHRAAIESEGPVPGLHRYTFAPIKGRFDC</sequence>
<keyword id="KW-0963">Cytoplasm</keyword>
<keyword id="KW-0255">Endonuclease</keyword>
<keyword id="KW-0378">Hydrolase</keyword>
<keyword id="KW-0464">Manganese</keyword>
<keyword id="KW-0479">Metal-binding</keyword>
<keyword id="KW-0540">Nuclease</keyword>
<reference key="1">
    <citation type="submission" date="1998-03" db="EMBL/GenBank/DDBJ databases">
        <title>Cloning and nucleotide sequence of ribonuclease HII.</title>
        <authorList>
            <person name="Hernandez-Castro R."/>
            <person name="Sahagun-Ruiz A."/>
            <person name="Verdugo-Rodriguez A."/>
            <person name="Gutierrea-Pabello J.A."/>
            <person name="Waghela S."/>
            <person name="Adams L.G."/>
            <person name="Suarez-Guemes F."/>
        </authorList>
    </citation>
    <scope>NUCLEOTIDE SEQUENCE [GENOMIC DNA]</scope>
    <source>
        <strain>133</strain>
    </source>
</reference>
<reference key="2">
    <citation type="journal article" date="2002" name="Proc. Natl. Acad. Sci. U.S.A.">
        <title>The genome sequence of the facultative intracellular pathogen Brucella melitensis.</title>
        <authorList>
            <person name="DelVecchio V.G."/>
            <person name="Kapatral V."/>
            <person name="Redkar R.J."/>
            <person name="Patra G."/>
            <person name="Mujer C."/>
            <person name="Los T."/>
            <person name="Ivanova N."/>
            <person name="Anderson I."/>
            <person name="Bhattacharyya A."/>
            <person name="Lykidis A."/>
            <person name="Reznik G."/>
            <person name="Jablonski L."/>
            <person name="Larsen N."/>
            <person name="D'Souza M."/>
            <person name="Bernal A."/>
            <person name="Mazur M."/>
            <person name="Goltsman E."/>
            <person name="Selkov E."/>
            <person name="Elzer P.H."/>
            <person name="Hagius S."/>
            <person name="O'Callaghan D."/>
            <person name="Letesson J.-J."/>
            <person name="Haselkorn R."/>
            <person name="Kyrpides N.C."/>
            <person name="Overbeek R."/>
        </authorList>
    </citation>
    <scope>NUCLEOTIDE SEQUENCE [LARGE SCALE GENOMIC DNA]</scope>
    <source>
        <strain>ATCC 23456 / CCUG 17765 / NCTC 10094 / 16M</strain>
    </source>
</reference>
<organism>
    <name type="scientific">Brucella melitensis biotype 1 (strain ATCC 23456 / CCUG 17765 / NCTC 10094 / 16M)</name>
    <dbReference type="NCBI Taxonomy" id="224914"/>
    <lineage>
        <taxon>Bacteria</taxon>
        <taxon>Pseudomonadati</taxon>
        <taxon>Pseudomonadota</taxon>
        <taxon>Alphaproteobacteria</taxon>
        <taxon>Hyphomicrobiales</taxon>
        <taxon>Brucellaceae</taxon>
        <taxon>Brucella/Ochrobactrum group</taxon>
        <taxon>Brucella</taxon>
    </lineage>
</organism>
<name>RNH2_BRUME</name>
<evidence type="ECO:0000250" key="1"/>
<evidence type="ECO:0000255" key="2">
    <source>
        <dbReference type="PROSITE-ProRule" id="PRU01319"/>
    </source>
</evidence>
<evidence type="ECO:0000305" key="3"/>
<comment type="function">
    <text evidence="1">Endonuclease that specifically degrades the RNA of RNA-DNA hybrids.</text>
</comment>
<comment type="catalytic activity">
    <reaction>
        <text>Endonucleolytic cleavage to 5'-phosphomonoester.</text>
        <dbReference type="EC" id="3.1.26.4"/>
    </reaction>
</comment>
<comment type="cofactor">
    <cofactor evidence="1">
        <name>Mn(2+)</name>
        <dbReference type="ChEBI" id="CHEBI:29035"/>
    </cofactor>
    <cofactor evidence="1">
        <name>Mg(2+)</name>
        <dbReference type="ChEBI" id="CHEBI:18420"/>
    </cofactor>
    <text evidence="1">Manganese or magnesium. Binds 1 divalent metal ion per monomer in the absence of substrate. May bind a second metal ion after substrate binding.</text>
</comment>
<comment type="subcellular location">
    <subcellularLocation>
        <location evidence="3">Cytoplasm</location>
    </subcellularLocation>
</comment>
<comment type="similarity">
    <text evidence="3">Belongs to the RNase HII family.</text>
</comment>
<feature type="chain" id="PRO_0000111551" description="Ribonuclease HII">
    <location>
        <begin position="1"/>
        <end position="220"/>
    </location>
</feature>
<feature type="domain" description="RNase H type-2" evidence="2">
    <location>
        <begin position="32"/>
        <end position="220"/>
    </location>
</feature>
<feature type="binding site" evidence="1">
    <location>
        <position position="38"/>
    </location>
    <ligand>
        <name>a divalent metal cation</name>
        <dbReference type="ChEBI" id="CHEBI:60240"/>
    </ligand>
</feature>
<feature type="binding site" evidence="1">
    <location>
        <position position="39"/>
    </location>
    <ligand>
        <name>a divalent metal cation</name>
        <dbReference type="ChEBI" id="CHEBI:60240"/>
    </ligand>
</feature>
<feature type="binding site" evidence="1">
    <location>
        <position position="130"/>
    </location>
    <ligand>
        <name>a divalent metal cation</name>
        <dbReference type="ChEBI" id="CHEBI:60240"/>
    </ligand>
</feature>
<accession>P0A4D9</accession>
<accession>O68821</accession>